<dbReference type="EMBL" id="AJ938182">
    <property type="protein sequence ID" value="CAI80816.1"/>
    <property type="molecule type" value="Genomic_DNA"/>
</dbReference>
<dbReference type="RefSeq" id="WP_000036631.1">
    <property type="nucleotide sequence ID" value="NC_007622.1"/>
</dbReference>
<dbReference type="PDB" id="8BDV">
    <property type="method" value="NMR"/>
    <property type="chains" value="A=2-155"/>
</dbReference>
<dbReference type="PDBsum" id="8BDV"/>
<dbReference type="SMR" id="Q2YXK3"/>
<dbReference type="KEGG" id="sab:SAB1127"/>
<dbReference type="HOGENOM" id="CLU_070525_2_0_9"/>
<dbReference type="GO" id="GO:0005829">
    <property type="term" value="C:cytosol"/>
    <property type="evidence" value="ECO:0007669"/>
    <property type="project" value="TreeGrafter"/>
</dbReference>
<dbReference type="GO" id="GO:0000028">
    <property type="term" value="P:ribosomal small subunit assembly"/>
    <property type="evidence" value="ECO:0007669"/>
    <property type="project" value="TreeGrafter"/>
</dbReference>
<dbReference type="GO" id="GO:0006412">
    <property type="term" value="P:translation"/>
    <property type="evidence" value="ECO:0007669"/>
    <property type="project" value="TreeGrafter"/>
</dbReference>
<dbReference type="CDD" id="cd01734">
    <property type="entry name" value="YlxS_C"/>
    <property type="match status" value="1"/>
</dbReference>
<dbReference type="FunFam" id="3.30.300.70:FF:000001">
    <property type="entry name" value="Ribosome maturation factor RimP"/>
    <property type="match status" value="1"/>
</dbReference>
<dbReference type="Gene3D" id="2.30.30.180">
    <property type="entry name" value="Ribosome maturation factor RimP, C-terminal domain"/>
    <property type="match status" value="1"/>
</dbReference>
<dbReference type="Gene3D" id="3.30.300.70">
    <property type="entry name" value="RimP-like superfamily, N-terminal"/>
    <property type="match status" value="1"/>
</dbReference>
<dbReference type="HAMAP" id="MF_01077">
    <property type="entry name" value="RimP"/>
    <property type="match status" value="1"/>
</dbReference>
<dbReference type="InterPro" id="IPR003728">
    <property type="entry name" value="Ribosome_maturation_RimP"/>
</dbReference>
<dbReference type="InterPro" id="IPR028998">
    <property type="entry name" value="RimP_C"/>
</dbReference>
<dbReference type="InterPro" id="IPR036847">
    <property type="entry name" value="RimP_C_sf"/>
</dbReference>
<dbReference type="InterPro" id="IPR028989">
    <property type="entry name" value="RimP_N"/>
</dbReference>
<dbReference type="InterPro" id="IPR035956">
    <property type="entry name" value="RimP_N_sf"/>
</dbReference>
<dbReference type="NCBIfam" id="NF000928">
    <property type="entry name" value="PRK00092.1-2"/>
    <property type="match status" value="1"/>
</dbReference>
<dbReference type="PANTHER" id="PTHR33867">
    <property type="entry name" value="RIBOSOME MATURATION FACTOR RIMP"/>
    <property type="match status" value="1"/>
</dbReference>
<dbReference type="PANTHER" id="PTHR33867:SF1">
    <property type="entry name" value="RIBOSOME MATURATION FACTOR RIMP"/>
    <property type="match status" value="1"/>
</dbReference>
<dbReference type="Pfam" id="PF17384">
    <property type="entry name" value="DUF150_C"/>
    <property type="match status" value="1"/>
</dbReference>
<dbReference type="Pfam" id="PF02576">
    <property type="entry name" value="RimP_N"/>
    <property type="match status" value="1"/>
</dbReference>
<dbReference type="SUPFAM" id="SSF74942">
    <property type="entry name" value="YhbC-like, C-terminal domain"/>
    <property type="match status" value="1"/>
</dbReference>
<dbReference type="SUPFAM" id="SSF75420">
    <property type="entry name" value="YhbC-like, N-terminal domain"/>
    <property type="match status" value="1"/>
</dbReference>
<organism>
    <name type="scientific">Staphylococcus aureus (strain bovine RF122 / ET3-1)</name>
    <dbReference type="NCBI Taxonomy" id="273036"/>
    <lineage>
        <taxon>Bacteria</taxon>
        <taxon>Bacillati</taxon>
        <taxon>Bacillota</taxon>
        <taxon>Bacilli</taxon>
        <taxon>Bacillales</taxon>
        <taxon>Staphylococcaceae</taxon>
        <taxon>Staphylococcus</taxon>
    </lineage>
</organism>
<gene>
    <name evidence="1" type="primary">rimP</name>
    <name type="ordered locus">SAB1127</name>
</gene>
<name>RIMP_STAAB</name>
<keyword id="KW-0002">3D-structure</keyword>
<keyword id="KW-0963">Cytoplasm</keyword>
<keyword id="KW-0690">Ribosome biogenesis</keyword>
<sequence length="155" mass="17627">MSKITEQVEVIVKPIMEDLNFELVDVEYVKEGRDHFLRISIDKEGGVDLNDCTLASEKISEAMDANDPIPEMYYLDVASPGAERPIKKEQDFQNAITKPVFVSLYVPIEGEKEWLGILQEVNNETIVVQVKIKARTKDIEIPRDKIAKARHAVMI</sequence>
<feature type="chain" id="PRO_0000229280" description="Ribosome maturation factor RimP">
    <location>
        <begin position="1"/>
        <end position="155"/>
    </location>
</feature>
<accession>Q2YXK3</accession>
<protein>
    <recommendedName>
        <fullName evidence="1">Ribosome maturation factor RimP</fullName>
    </recommendedName>
</protein>
<comment type="function">
    <text evidence="1">Required for maturation of 30S ribosomal subunits.</text>
</comment>
<comment type="subcellular location">
    <subcellularLocation>
        <location evidence="1">Cytoplasm</location>
    </subcellularLocation>
</comment>
<comment type="similarity">
    <text evidence="1">Belongs to the RimP family.</text>
</comment>
<proteinExistence type="evidence at protein level"/>
<reference key="1">
    <citation type="journal article" date="2007" name="PLoS ONE">
        <title>Molecular correlates of host specialization in Staphylococcus aureus.</title>
        <authorList>
            <person name="Herron-Olson L."/>
            <person name="Fitzgerald J.R."/>
            <person name="Musser J.M."/>
            <person name="Kapur V."/>
        </authorList>
    </citation>
    <scope>NUCLEOTIDE SEQUENCE [LARGE SCALE GENOMIC DNA]</scope>
    <source>
        <strain>bovine RF122 / ET3-1</strain>
    </source>
</reference>
<evidence type="ECO:0000255" key="1">
    <source>
        <dbReference type="HAMAP-Rule" id="MF_01077"/>
    </source>
</evidence>